<feature type="chain" id="PRO_0000402740" description="3-aminoacrylate deaminase RutC">
    <location>
        <begin position="1"/>
        <end position="128"/>
    </location>
</feature>
<keyword id="KW-0378">Hydrolase</keyword>
<keyword id="KW-1185">Reference proteome</keyword>
<reference key="1">
    <citation type="journal article" date="2007" name="J. Bacteriol.">
        <title>The genome sequence of avian pathogenic Escherichia coli strain O1:K1:H7 shares strong similarities with human extraintestinal pathogenic E. coli genomes.</title>
        <authorList>
            <person name="Johnson T.J."/>
            <person name="Kariyawasam S."/>
            <person name="Wannemuehler Y."/>
            <person name="Mangiamele P."/>
            <person name="Johnson S.J."/>
            <person name="Doetkott C."/>
            <person name="Skyberg J.A."/>
            <person name="Lynne A.M."/>
            <person name="Johnson J.R."/>
            <person name="Nolan L.K."/>
        </authorList>
    </citation>
    <scope>NUCLEOTIDE SEQUENCE [LARGE SCALE GENOMIC DNA]</scope>
</reference>
<dbReference type="EC" id="3.5.-.-" evidence="1"/>
<dbReference type="EMBL" id="CP000468">
    <property type="protein sequence ID" value="ABJ00405.1"/>
    <property type="molecule type" value="Genomic_DNA"/>
</dbReference>
<dbReference type="RefSeq" id="WP_001126780.1">
    <property type="nucleotide sequence ID" value="NZ_CADILS010000016.1"/>
</dbReference>
<dbReference type="SMR" id="A1A9R5"/>
<dbReference type="GeneID" id="75171086"/>
<dbReference type="KEGG" id="ecv:APECO1_101"/>
<dbReference type="HOGENOM" id="CLU_100715_7_3_6"/>
<dbReference type="Proteomes" id="UP000008216">
    <property type="component" value="Chromosome"/>
</dbReference>
<dbReference type="GO" id="GO:0005829">
    <property type="term" value="C:cytosol"/>
    <property type="evidence" value="ECO:0007669"/>
    <property type="project" value="TreeGrafter"/>
</dbReference>
<dbReference type="GO" id="GO:0019239">
    <property type="term" value="F:deaminase activity"/>
    <property type="evidence" value="ECO:0007669"/>
    <property type="project" value="TreeGrafter"/>
</dbReference>
<dbReference type="GO" id="GO:0019740">
    <property type="term" value="P:nitrogen utilization"/>
    <property type="evidence" value="ECO:0007669"/>
    <property type="project" value="UniProtKB-UniRule"/>
</dbReference>
<dbReference type="GO" id="GO:0006212">
    <property type="term" value="P:uracil catabolic process"/>
    <property type="evidence" value="ECO:0007669"/>
    <property type="project" value="UniProtKB-UniRule"/>
</dbReference>
<dbReference type="CDD" id="cd00448">
    <property type="entry name" value="YjgF_YER057c_UK114_family"/>
    <property type="match status" value="1"/>
</dbReference>
<dbReference type="FunFam" id="3.30.1330.40:FF:000003">
    <property type="entry name" value="Putative aminoacrylate peracid reductase RutC"/>
    <property type="match status" value="1"/>
</dbReference>
<dbReference type="Gene3D" id="3.30.1330.40">
    <property type="entry name" value="RutC-like"/>
    <property type="match status" value="1"/>
</dbReference>
<dbReference type="HAMAP" id="MF_00831">
    <property type="entry name" value="RutC"/>
    <property type="match status" value="1"/>
</dbReference>
<dbReference type="InterPro" id="IPR019897">
    <property type="entry name" value="RidA_CS"/>
</dbReference>
<dbReference type="InterPro" id="IPR019898">
    <property type="entry name" value="RutC"/>
</dbReference>
<dbReference type="InterPro" id="IPR035959">
    <property type="entry name" value="RutC-like_sf"/>
</dbReference>
<dbReference type="InterPro" id="IPR006175">
    <property type="entry name" value="YjgF/YER057c/UK114"/>
</dbReference>
<dbReference type="NCBIfam" id="TIGR03610">
    <property type="entry name" value="RutC"/>
    <property type="match status" value="1"/>
</dbReference>
<dbReference type="PANTHER" id="PTHR11803">
    <property type="entry name" value="2-IMINOBUTANOATE/2-IMINOPROPANOATE DEAMINASE RIDA"/>
    <property type="match status" value="1"/>
</dbReference>
<dbReference type="PANTHER" id="PTHR11803:SF58">
    <property type="entry name" value="PROTEIN HMF1-RELATED"/>
    <property type="match status" value="1"/>
</dbReference>
<dbReference type="Pfam" id="PF01042">
    <property type="entry name" value="Ribonuc_L-PSP"/>
    <property type="match status" value="1"/>
</dbReference>
<dbReference type="SUPFAM" id="SSF55298">
    <property type="entry name" value="YjgF-like"/>
    <property type="match status" value="1"/>
</dbReference>
<dbReference type="PROSITE" id="PS01094">
    <property type="entry name" value="UPF0076"/>
    <property type="match status" value="1"/>
</dbReference>
<organism>
    <name type="scientific">Escherichia coli O1:K1 / APEC</name>
    <dbReference type="NCBI Taxonomy" id="405955"/>
    <lineage>
        <taxon>Bacteria</taxon>
        <taxon>Pseudomonadati</taxon>
        <taxon>Pseudomonadota</taxon>
        <taxon>Gammaproteobacteria</taxon>
        <taxon>Enterobacterales</taxon>
        <taxon>Enterobacteriaceae</taxon>
        <taxon>Escherichia</taxon>
    </lineage>
</organism>
<comment type="function">
    <text evidence="1">Involved in pyrimidine catabolism. Catalyzes the deamination of 3-aminoacrylate to malonic semialdehyde, a reaction that can also occur spontaneously. RutC may facilitate the reaction and modulate the metabolic fitness, rather than catalyzing essential functions.</text>
</comment>
<comment type="catalytic activity">
    <reaction evidence="1">
        <text>(Z)-3-aminoacrylate + H2O + H(+) = 3-oxopropanoate + NH4(+)</text>
        <dbReference type="Rhea" id="RHEA:34947"/>
        <dbReference type="ChEBI" id="CHEBI:15377"/>
        <dbReference type="ChEBI" id="CHEBI:15378"/>
        <dbReference type="ChEBI" id="CHEBI:28938"/>
        <dbReference type="ChEBI" id="CHEBI:33190"/>
        <dbReference type="ChEBI" id="CHEBI:59894"/>
    </reaction>
</comment>
<comment type="subunit">
    <text evidence="1">Homotrimer.</text>
</comment>
<comment type="similarity">
    <text evidence="1">Belongs to the RutC family.</text>
</comment>
<proteinExistence type="inferred from homology"/>
<accession>A1A9R5</accession>
<sequence>MPKSVIIPAGSSAPLAPFVPGTLADGVVYVSGTLAFDQHNNVLFADDPKAQTRHVLETIRKVIETAGGTMADVTFNSIFITDWKNYAAINEIYAEFFPGDKPARFCIQCGLVKPDALVEIATIAHIAK</sequence>
<protein>
    <recommendedName>
        <fullName evidence="1">3-aminoacrylate deaminase RutC</fullName>
        <shortName evidence="1">3-AA deaminase</shortName>
        <ecNumber evidence="1">3.5.-.-</ecNumber>
    </recommendedName>
</protein>
<name>RUTC_ECOK1</name>
<evidence type="ECO:0000255" key="1">
    <source>
        <dbReference type="HAMAP-Rule" id="MF_00831"/>
    </source>
</evidence>
<gene>
    <name evidence="1" type="primary">rutC</name>
    <name type="ordered locus">Ecok1_09110</name>
    <name type="ORF">APECO1_101</name>
</gene>